<name>FUT1_RABIT</name>
<reference key="1">
    <citation type="journal article" date="1995" name="J. Biol. Chem.">
        <title>Molecular cloning and expression of two types of rabbit beta-galactoside alpha 1,2-fucosyltransferase.</title>
        <authorList>
            <person name="Hitoshi S."/>
            <person name="Kusunoki S."/>
            <person name="Kanazawa I."/>
            <person name="Tsuji S."/>
        </authorList>
    </citation>
    <scope>NUCLEOTIDE SEQUENCE [MRNA]</scope>
    <source>
        <tissue>Brain</tissue>
    </source>
</reference>
<organism>
    <name type="scientific">Oryctolagus cuniculus</name>
    <name type="common">Rabbit</name>
    <dbReference type="NCBI Taxonomy" id="9986"/>
    <lineage>
        <taxon>Eukaryota</taxon>
        <taxon>Metazoa</taxon>
        <taxon>Chordata</taxon>
        <taxon>Craniata</taxon>
        <taxon>Vertebrata</taxon>
        <taxon>Euteleostomi</taxon>
        <taxon>Mammalia</taxon>
        <taxon>Eutheria</taxon>
        <taxon>Euarchontoglires</taxon>
        <taxon>Glires</taxon>
        <taxon>Lagomorpha</taxon>
        <taxon>Leporidae</taxon>
        <taxon>Oryctolagus</taxon>
    </lineage>
</organism>
<gene>
    <name evidence="3" type="primary">FUT1</name>
    <name type="synonym">RFT-I</name>
</gene>
<feature type="chain" id="PRO_0000149101" description="Galactoside alpha-(1,2)-fucosyltransferase 1">
    <location>
        <begin position="1"/>
        <end position="373"/>
    </location>
</feature>
<feature type="topological domain" description="Cytoplasmic" evidence="4">
    <location>
        <begin position="1"/>
        <end position="12"/>
    </location>
</feature>
<feature type="transmembrane region" description="Helical; Signal-anchor for type II membrane protein" evidence="4">
    <location>
        <begin position="13"/>
        <end position="29"/>
    </location>
</feature>
<feature type="topological domain" description="Lumenal" evidence="4">
    <location>
        <begin position="30"/>
        <end position="373"/>
    </location>
</feature>
<feature type="glycosylation site" description="N-linked (GlcNAc...) asparagine" evidence="4">
    <location>
        <position position="66"/>
    </location>
</feature>
<feature type="glycosylation site" description="N-linked (GlcNAc...) asparagine" evidence="4">
    <location>
        <position position="301"/>
    </location>
</feature>
<feature type="glycosylation site" description="N-linked (GlcNAc...) asparagine" evidence="4">
    <location>
        <position position="327"/>
    </location>
</feature>
<accession>Q10979</accession>
<evidence type="ECO:0000250" key="1">
    <source>
        <dbReference type="UniProtKB" id="F6Q1T7"/>
    </source>
</evidence>
<evidence type="ECO:0000250" key="2">
    <source>
        <dbReference type="UniProtKB" id="O09160"/>
    </source>
</evidence>
<evidence type="ECO:0000250" key="3">
    <source>
        <dbReference type="UniProtKB" id="P19526"/>
    </source>
</evidence>
<evidence type="ECO:0000255" key="4"/>
<evidence type="ECO:0000305" key="5"/>
<dbReference type="EC" id="2.4.1.69" evidence="2"/>
<dbReference type="EC" id="2.4.1.344" evidence="3"/>
<dbReference type="EMBL" id="X80226">
    <property type="protein sequence ID" value="CAA56513.1"/>
    <property type="molecule type" value="mRNA"/>
</dbReference>
<dbReference type="PIR" id="A56392">
    <property type="entry name" value="A56392"/>
</dbReference>
<dbReference type="RefSeq" id="NP_001075872.1">
    <property type="nucleotide sequence ID" value="NM_001082403.1"/>
</dbReference>
<dbReference type="SMR" id="Q10979"/>
<dbReference type="FunCoup" id="Q10979">
    <property type="interactions" value="43"/>
</dbReference>
<dbReference type="STRING" id="9986.ENSOCUP00000014751"/>
<dbReference type="CAZy" id="GT11">
    <property type="family name" value="Glycosyltransferase Family 11"/>
</dbReference>
<dbReference type="GlyCosmos" id="Q10979">
    <property type="glycosylation" value="3 sites, No reported glycans"/>
</dbReference>
<dbReference type="PaxDb" id="9986-ENSOCUP00000014751"/>
<dbReference type="GeneID" id="100009291"/>
<dbReference type="KEGG" id="ocu:100009291"/>
<dbReference type="CTD" id="2523"/>
<dbReference type="eggNOG" id="ENOG502S316">
    <property type="taxonomic scope" value="Eukaryota"/>
</dbReference>
<dbReference type="InParanoid" id="Q10979"/>
<dbReference type="OrthoDB" id="3226at2759"/>
<dbReference type="BRENDA" id="2.4.1.69">
    <property type="organism ID" value="1749"/>
</dbReference>
<dbReference type="UniPathway" id="UPA00378"/>
<dbReference type="Proteomes" id="UP000001811">
    <property type="component" value="Unplaced"/>
</dbReference>
<dbReference type="GO" id="GO:0032580">
    <property type="term" value="C:Golgi cisterna membrane"/>
    <property type="evidence" value="ECO:0007669"/>
    <property type="project" value="UniProtKB-SubCell"/>
</dbReference>
<dbReference type="GO" id="GO:0031127">
    <property type="term" value="F:alpha-(1,2)-fucosyltransferase activity"/>
    <property type="evidence" value="ECO:0000250"/>
    <property type="project" value="UniProtKB"/>
</dbReference>
<dbReference type="GO" id="GO:0008107">
    <property type="term" value="F:galactoside 2-alpha-L-fucosyltransferase activity"/>
    <property type="evidence" value="ECO:0007669"/>
    <property type="project" value="UniProtKB-EC"/>
</dbReference>
<dbReference type="GO" id="GO:0005975">
    <property type="term" value="P:carbohydrate metabolic process"/>
    <property type="evidence" value="ECO:0007669"/>
    <property type="project" value="InterPro"/>
</dbReference>
<dbReference type="GO" id="GO:0036065">
    <property type="term" value="P:fucosylation"/>
    <property type="evidence" value="ECO:0000250"/>
    <property type="project" value="UniProtKB"/>
</dbReference>
<dbReference type="GO" id="GO:0006629">
    <property type="term" value="P:lipid metabolic process"/>
    <property type="evidence" value="ECO:0007669"/>
    <property type="project" value="UniProtKB-KW"/>
</dbReference>
<dbReference type="GO" id="GO:0021772">
    <property type="term" value="P:olfactory bulb development"/>
    <property type="evidence" value="ECO:0000250"/>
    <property type="project" value="UniProtKB"/>
</dbReference>
<dbReference type="GO" id="GO:0001954">
    <property type="term" value="P:positive regulation of cell-matrix adhesion"/>
    <property type="evidence" value="ECO:0000250"/>
    <property type="project" value="UniProtKB"/>
</dbReference>
<dbReference type="GO" id="GO:0010595">
    <property type="term" value="P:positive regulation of endothelial cell migration"/>
    <property type="evidence" value="ECO:0000250"/>
    <property type="project" value="UniProtKB"/>
</dbReference>
<dbReference type="GO" id="GO:1904906">
    <property type="term" value="P:positive regulation of endothelial cell-matrix adhesion via fibronectin"/>
    <property type="evidence" value="ECO:0000250"/>
    <property type="project" value="UniProtKB"/>
</dbReference>
<dbReference type="GO" id="GO:1903672">
    <property type="term" value="P:positive regulation of sprouting angiogenesis"/>
    <property type="evidence" value="ECO:0000250"/>
    <property type="project" value="UniProtKB"/>
</dbReference>
<dbReference type="GO" id="GO:0006486">
    <property type="term" value="P:protein glycosylation"/>
    <property type="evidence" value="ECO:0000250"/>
    <property type="project" value="UniProtKB"/>
</dbReference>
<dbReference type="GO" id="GO:0030155">
    <property type="term" value="P:regulation of cell adhesion"/>
    <property type="evidence" value="ECO:0000250"/>
    <property type="project" value="UniProtKB"/>
</dbReference>
<dbReference type="GO" id="GO:0001936">
    <property type="term" value="P:regulation of endothelial cell proliferation"/>
    <property type="evidence" value="ECO:0000250"/>
    <property type="project" value="UniProtKB"/>
</dbReference>
<dbReference type="CDD" id="cd11301">
    <property type="entry name" value="Fut1_Fut2_like"/>
    <property type="match status" value="1"/>
</dbReference>
<dbReference type="InterPro" id="IPR002516">
    <property type="entry name" value="Glyco_trans_11"/>
</dbReference>
<dbReference type="PANTHER" id="PTHR11927">
    <property type="entry name" value="GALACTOSIDE 2-L-FUCOSYLTRANSFERASE"/>
    <property type="match status" value="1"/>
</dbReference>
<dbReference type="PANTHER" id="PTHR11927:SF4">
    <property type="entry name" value="GALACTOSIDE ALPHA-(1,2)-FUCOSYLTRANSFERASE 1"/>
    <property type="match status" value="1"/>
</dbReference>
<dbReference type="Pfam" id="PF01531">
    <property type="entry name" value="Glyco_transf_11"/>
    <property type="match status" value="1"/>
</dbReference>
<protein>
    <recommendedName>
        <fullName evidence="3">Galactoside alpha-(1,2)-fucosyltransferase 1</fullName>
    </recommendedName>
    <alternativeName>
        <fullName>Alpha(1,2)FT 1</fullName>
    </alternativeName>
    <alternativeName>
        <fullName>Fucosyltransferase 1</fullName>
    </alternativeName>
    <alternativeName>
        <fullName>GDP-L-fucose:beta-D-galactoside 2-alpha-L-fucosyltransferase 1</fullName>
    </alternativeName>
    <alternativeName>
        <fullName evidence="2">Type 1 galactoside alpha-(1,2)-fucosyltransferase FUT1</fullName>
        <ecNumber evidence="2">2.4.1.69</ecNumber>
    </alternativeName>
    <alternativeName>
        <fullName evidence="3">Type 2 galactoside alpha-(1,2)-fucosyltransferase FUT1</fullName>
        <ecNumber evidence="3">2.4.1.344</ecNumber>
    </alternativeName>
</protein>
<proteinExistence type="evidence at transcript level"/>
<keyword id="KW-0325">Glycoprotein</keyword>
<keyword id="KW-0328">Glycosyltransferase</keyword>
<keyword id="KW-0333">Golgi apparatus</keyword>
<keyword id="KW-0443">Lipid metabolism</keyword>
<keyword id="KW-0472">Membrane</keyword>
<keyword id="KW-1185">Reference proteome</keyword>
<keyword id="KW-0735">Signal-anchor</keyword>
<keyword id="KW-0808">Transferase</keyword>
<keyword id="KW-0812">Transmembrane</keyword>
<keyword id="KW-1133">Transmembrane helix</keyword>
<sequence>MWPPSRRQLCLAFLLVCALSAFSFLLHLHQDLFRNGLALSLPCLERQPVPAPVAIVCLPVTSPASNASSCAGRPAAPSGIWTIHPDGRFGNQMGQYATLLALAQLNGRRAFILPAMHAALAPVFRITLPVLAPEVNRRTSWKQLLLHDWMSEEYSRLEDPFLKFTGFPCSWTFFHHVREQIRREFTLHDHLREEAQRLLGKLRLGRTGARPRTFVGVHVRRGDYLQVMPQRWKGVVGDRAYLQQAMDWFRARHEAPIFVVTSNGMKWCWENIDASRGDVVFAGNGLESSPAKDFALLTQCNHTVMTIGTFGFWAAYLAGGDTVYLANFTLPDSEFLKIFKPEAAFLPEWVGINADLSPVRTLSGSWRPWRFLG</sequence>
<comment type="function">
    <text evidence="2 3">Catalyzes the transfer of L-fucose, from a guanosine diphosphate-beta-L-fucose, to the terminal galactose residue of glycoconjugates through an alpha(1,2) linkage leading to H antigen synthesis that is an intermediate substrate in the synthesis of ABO blood group antigens. H antigen is essential for maturation of the glomerular layer of the main olfactory bulb, in cell migration and early cell-cell contacts during tumor associated angiogenesis (By similarity). Preferentially fucosylates soluble lactose and to a lesser extent fucosylates glycolipids gangliosides GA1 and GM1a (By similarity).</text>
</comment>
<comment type="catalytic activity">
    <reaction evidence="3">
        <text>a beta-D-galactosyl-(1-&gt;4)-N-acetyl-beta-D-glucosaminyl derivative + GDP-beta-L-fucose = an alpha-L-Fuc-(1-&gt;2)-beta-D-Gal-(1-&gt;4)-beta-D-GlcNAc derivative + GDP + H(+)</text>
        <dbReference type="Rhea" id="RHEA:50668"/>
        <dbReference type="ChEBI" id="CHEBI:15378"/>
        <dbReference type="ChEBI" id="CHEBI:57273"/>
        <dbReference type="ChEBI" id="CHEBI:58189"/>
        <dbReference type="ChEBI" id="CHEBI:133507"/>
        <dbReference type="ChEBI" id="CHEBI:133510"/>
        <dbReference type="EC" id="2.4.1.344"/>
    </reaction>
</comment>
<comment type="catalytic activity">
    <reaction evidence="2">
        <text>a ganglioside GA1 + GDP-beta-L-fucose = a ganglioside Fuc-GA1 + GDP + H(+)</text>
        <dbReference type="Rhea" id="RHEA:48320"/>
        <dbReference type="ChEBI" id="CHEBI:15378"/>
        <dbReference type="ChEBI" id="CHEBI:57273"/>
        <dbReference type="ChEBI" id="CHEBI:58189"/>
        <dbReference type="ChEBI" id="CHEBI:88069"/>
        <dbReference type="ChEBI" id="CHEBI:90262"/>
    </reaction>
    <physiologicalReaction direction="left-to-right" evidence="2">
        <dbReference type="Rhea" id="RHEA:48321"/>
    </physiologicalReaction>
</comment>
<comment type="catalytic activity">
    <reaction evidence="2">
        <text>a beta-D-Gal-(1-&gt;3)-beta-D-GlcNAc-(1-&gt;3)-beta-D-Gal-(1-&gt;4)-beta-D-Glc-(1&lt;-&gt;1')-Cer(d18:1(4E)) + GDP-beta-L-fucose = alpha-L-fucosyl-(1-&gt;2)- beta-D-galactosyl-(1-&gt;3)-N-acetyl-beta-D-glucosaminyl-(1-&gt;3)-beta-D-galactosyl-(1-&gt;4)-beta-D-glucosyl-(1&lt;-&gt;1')-N-acylsphing-4-enine + GDP + H(+)</text>
        <dbReference type="Rhea" id="RHEA:32175"/>
        <dbReference type="ChEBI" id="CHEBI:15378"/>
        <dbReference type="ChEBI" id="CHEBI:17292"/>
        <dbReference type="ChEBI" id="CHEBI:28743"/>
        <dbReference type="ChEBI" id="CHEBI:57273"/>
        <dbReference type="ChEBI" id="CHEBI:58189"/>
        <dbReference type="EC" id="2.4.1.69"/>
    </reaction>
    <physiologicalReaction direction="left-to-right" evidence="2">
        <dbReference type="Rhea" id="RHEA:32176"/>
    </physiologicalReaction>
</comment>
<comment type="catalytic activity">
    <reaction evidence="2">
        <text>a neolactoside nLc4Cer(d18:1(4E)) + GDP-beta-L-fucose = a neolactoside IV(2)-alpha-Fuc-nLc4Cer(d18:1(4E)) + GDP + H(+)</text>
        <dbReference type="Rhea" id="RHEA:48304"/>
        <dbReference type="ChEBI" id="CHEBI:15378"/>
        <dbReference type="ChEBI" id="CHEBI:17006"/>
        <dbReference type="ChEBI" id="CHEBI:28691"/>
        <dbReference type="ChEBI" id="CHEBI:57273"/>
        <dbReference type="ChEBI" id="CHEBI:58189"/>
    </reaction>
    <physiologicalReaction direction="left-to-right" evidence="2">
        <dbReference type="Rhea" id="RHEA:48305"/>
    </physiologicalReaction>
</comment>
<comment type="catalytic activity">
    <reaction evidence="1">
        <text>a ganglioside GM1 + GDP-beta-L-fucose = a ganglioside Fuc-GM1 + GDP + H(+)</text>
        <dbReference type="Rhea" id="RHEA:48292"/>
        <dbReference type="ChEBI" id="CHEBI:15378"/>
        <dbReference type="ChEBI" id="CHEBI:57273"/>
        <dbReference type="ChEBI" id="CHEBI:58189"/>
        <dbReference type="ChEBI" id="CHEBI:82639"/>
        <dbReference type="ChEBI" id="CHEBI:90189"/>
    </reaction>
    <physiologicalReaction direction="left-to-right" evidence="1">
        <dbReference type="Rhea" id="RHEA:48293"/>
    </physiologicalReaction>
</comment>
<comment type="catalytic activity">
    <reaction evidence="1">
        <text>beta-D-galactosyl-(1-&gt;3)-N-acetyl-D-galactosamine + GDP-beta-L-fucose = alpha-L-fucosyl-(1-&gt;2)-beta-D-galactosyl-(1-&gt;3)-N-acetyl-D-galactosamine + GDP + H(+)</text>
        <dbReference type="Rhea" id="RHEA:62964"/>
        <dbReference type="ChEBI" id="CHEBI:15378"/>
        <dbReference type="ChEBI" id="CHEBI:57273"/>
        <dbReference type="ChEBI" id="CHEBI:58189"/>
        <dbReference type="ChEBI" id="CHEBI:84728"/>
        <dbReference type="ChEBI" id="CHEBI:546807"/>
    </reaction>
    <physiologicalReaction direction="left-to-right" evidence="1">
        <dbReference type="Rhea" id="RHEA:62965"/>
    </physiologicalReaction>
</comment>
<comment type="pathway">
    <text evidence="3">Protein modification; protein glycosylation.</text>
</comment>
<comment type="subcellular location">
    <subcellularLocation>
        <location evidence="2">Golgi apparatus</location>
        <location evidence="2">Golgi stack membrane</location>
        <topology evidence="2">Single-pass type II membrane protein</topology>
    </subcellularLocation>
    <text evidence="2">Membrane-bound form in trans cisternae of Golgi.</text>
</comment>
<comment type="tissue specificity">
    <text>Brain.</text>
</comment>
<comment type="miscellaneous">
    <text>There are two genes (Fut1 and Fut2) which encode galactoside 2-L-fucosyltransferase. They are expressed in a tissue-specific manner with expression restricted to cells of mesodermal or endodermal origin respectively.</text>
</comment>
<comment type="similarity">
    <text evidence="5">Belongs to the glycosyltransferase 11 family.</text>
</comment>